<sequence length="339" mass="37134">MATTTMTMIQALRSAMDVMLERDDNVVVYGQDVGYFGGVFRCTEGLQTKYGKSRVFDAPISESGIVGTAVGMGAYGLRPVVEIQFADYFYPASDQIVSEMARLRYRSAGEFIAPLTLRMPCGGGIYGGQTHSQSPEAMFTQVCGLRTVMPSNPYDAKGLLIASIECDDPVIFLEPKRLYNGPFDGHHDRPVTPWSKHPHSAVPDGYYTVPLDKAAITRPGNDVSVLTYGTTVYVAQVAAEESGVDAEVIDLRSLWPLDLDTIVESVKKTGRCVVVHEATRTCGFGAELVSLVQEHCFHHLEAPIERVTGWDTPYPHAQEWAYFPGPSRVGAALKKVMEV</sequence>
<comment type="function">
    <text>The branched-chain alpha-keto dehydrogenase complex catalyzes the overall conversion of alpha-keto acids to acyl-CoA and CO(2). It contains multiple copies of three enzymatic components: branched-chain alpha-keto acid decarboxylase (E1), lipoamide acyltransferase (E2) and lipoamide dehydrogenase (E3).</text>
</comment>
<comment type="catalytic activity">
    <reaction>
        <text>N(6)-[(R)-lipoyl]-L-lysyl-[protein] + 3-methyl-2-oxobutanoate + H(+) = N(6)-[(R)-S(8)-2-methylpropanoyldihydrolipoyl]-L-lysyl-[protein] + CO2</text>
        <dbReference type="Rhea" id="RHEA:13457"/>
        <dbReference type="Rhea" id="RHEA-COMP:10474"/>
        <dbReference type="Rhea" id="RHEA-COMP:10497"/>
        <dbReference type="ChEBI" id="CHEBI:11851"/>
        <dbReference type="ChEBI" id="CHEBI:15378"/>
        <dbReference type="ChEBI" id="CHEBI:16526"/>
        <dbReference type="ChEBI" id="CHEBI:83099"/>
        <dbReference type="ChEBI" id="CHEBI:83142"/>
        <dbReference type="EC" id="1.2.4.4"/>
    </reaction>
</comment>
<comment type="cofactor">
    <cofactor>
        <name>thiamine diphosphate</name>
        <dbReference type="ChEBI" id="CHEBI:58937"/>
    </cofactor>
</comment>
<comment type="subunit">
    <text>Heterodimer of an alpha and a beta chain.</text>
</comment>
<comment type="sequence caution" evidence="1">
    <conflict type="erroneous initiation">
        <sequence resource="EMBL-CDS" id="AAA65615"/>
    </conflict>
</comment>
<dbReference type="EC" id="1.2.4.4"/>
<dbReference type="EMBL" id="M57613">
    <property type="protein sequence ID" value="AAA65616.1"/>
    <property type="molecule type" value="Genomic_DNA"/>
</dbReference>
<dbReference type="EMBL" id="M57613">
    <property type="protein sequence ID" value="AAA65615.1"/>
    <property type="status" value="ALT_INIT"/>
    <property type="molecule type" value="Genomic_DNA"/>
</dbReference>
<dbReference type="PIR" id="S01318">
    <property type="entry name" value="DEPSEB"/>
</dbReference>
<dbReference type="PDB" id="1QS0">
    <property type="method" value="X-ray"/>
    <property type="resolution" value="2.40 A"/>
    <property type="chains" value="B=2-339"/>
</dbReference>
<dbReference type="PDB" id="2BP7">
    <property type="method" value="X-ray"/>
    <property type="resolution" value="2.90 A"/>
    <property type="chains" value="B/D/F/H=1-339"/>
</dbReference>
<dbReference type="PDBsum" id="1QS0"/>
<dbReference type="PDBsum" id="2BP7"/>
<dbReference type="SMR" id="P09061"/>
<dbReference type="DIP" id="DIP-6209N"/>
<dbReference type="IntAct" id="P09061">
    <property type="interactions" value="1"/>
</dbReference>
<dbReference type="eggNOG" id="COG0022">
    <property type="taxonomic scope" value="Bacteria"/>
</dbReference>
<dbReference type="EvolutionaryTrace" id="P09061"/>
<dbReference type="GO" id="GO:0003863">
    <property type="term" value="F:3-methyl-2-oxobutanoate dehydrogenase (2-methylpropanoyl-transferring) activity"/>
    <property type="evidence" value="ECO:0007669"/>
    <property type="project" value="UniProtKB-EC"/>
</dbReference>
<dbReference type="GO" id="GO:0009083">
    <property type="term" value="P:branched-chain amino acid catabolic process"/>
    <property type="evidence" value="ECO:0007669"/>
    <property type="project" value="TreeGrafter"/>
</dbReference>
<dbReference type="GO" id="GO:0007584">
    <property type="term" value="P:response to nutrient"/>
    <property type="evidence" value="ECO:0007669"/>
    <property type="project" value="TreeGrafter"/>
</dbReference>
<dbReference type="CDD" id="cd07036">
    <property type="entry name" value="TPP_PYR_E1-PDHc-beta_like"/>
    <property type="match status" value="1"/>
</dbReference>
<dbReference type="FunFam" id="3.40.50.920:FF:000001">
    <property type="entry name" value="Pyruvate dehydrogenase E1 beta subunit"/>
    <property type="match status" value="1"/>
</dbReference>
<dbReference type="FunFam" id="3.40.50.970:FF:000001">
    <property type="entry name" value="Pyruvate dehydrogenase E1 beta subunit"/>
    <property type="match status" value="1"/>
</dbReference>
<dbReference type="Gene3D" id="3.40.50.920">
    <property type="match status" value="1"/>
</dbReference>
<dbReference type="Gene3D" id="3.40.50.970">
    <property type="match status" value="1"/>
</dbReference>
<dbReference type="InterPro" id="IPR029061">
    <property type="entry name" value="THDP-binding"/>
</dbReference>
<dbReference type="InterPro" id="IPR009014">
    <property type="entry name" value="Transketo_C/PFOR_II"/>
</dbReference>
<dbReference type="InterPro" id="IPR005475">
    <property type="entry name" value="Transketolase-like_Pyr-bd"/>
</dbReference>
<dbReference type="InterPro" id="IPR033248">
    <property type="entry name" value="Transketolase_C"/>
</dbReference>
<dbReference type="PANTHER" id="PTHR42980:SF1">
    <property type="entry name" value="2-OXOISOVALERATE DEHYDROGENASE SUBUNIT BETA, MITOCHONDRIAL"/>
    <property type="match status" value="1"/>
</dbReference>
<dbReference type="PANTHER" id="PTHR42980">
    <property type="entry name" value="2-OXOISOVALERATE DEHYDROGENASE SUBUNIT BETA-RELATED"/>
    <property type="match status" value="1"/>
</dbReference>
<dbReference type="Pfam" id="PF02779">
    <property type="entry name" value="Transket_pyr"/>
    <property type="match status" value="1"/>
</dbReference>
<dbReference type="Pfam" id="PF02780">
    <property type="entry name" value="Transketolase_C"/>
    <property type="match status" value="1"/>
</dbReference>
<dbReference type="SMART" id="SM00861">
    <property type="entry name" value="Transket_pyr"/>
    <property type="match status" value="1"/>
</dbReference>
<dbReference type="SUPFAM" id="SSF52518">
    <property type="entry name" value="Thiamin diphosphate-binding fold (THDP-binding)"/>
    <property type="match status" value="1"/>
</dbReference>
<dbReference type="SUPFAM" id="SSF52922">
    <property type="entry name" value="TK C-terminal domain-like"/>
    <property type="match status" value="1"/>
</dbReference>
<name>ODBB_PSEPU</name>
<protein>
    <recommendedName>
        <fullName>2-oxoisovalerate dehydrogenase subunit beta</fullName>
        <ecNumber>1.2.4.4</ecNumber>
    </recommendedName>
    <alternativeName>
        <fullName>Branched-chain alpha-keto acid dehydrogenase E1 component beta chain</fullName>
        <shortName>BCKDH E1-beta</shortName>
    </alternativeName>
</protein>
<evidence type="ECO:0000305" key="1"/>
<evidence type="ECO:0007829" key="2">
    <source>
        <dbReference type="PDB" id="1QS0"/>
    </source>
</evidence>
<evidence type="ECO:0007829" key="3">
    <source>
        <dbReference type="PDB" id="2BP7"/>
    </source>
</evidence>
<keyword id="KW-0002">3D-structure</keyword>
<keyword id="KW-0560">Oxidoreductase</keyword>
<keyword id="KW-0786">Thiamine pyrophosphate</keyword>
<reference key="1">
    <citation type="journal article" date="1988" name="Eur. J. Biochem.">
        <title>Similarity of the E1 subunits of branched-chain-oxoacid dehydrogenase from Pseudomonas putida to the corresponding subunits of mammalian branched-chain-oxoacid and pyruvate dehydrogenases.</title>
        <authorList>
            <person name="Burns G."/>
            <person name="Brown T."/>
            <person name="Hatter K."/>
            <person name="Idriss J."/>
            <person name="Sokatch J.R."/>
        </authorList>
    </citation>
    <scope>NUCLEOTIDE SEQUENCE [GENOMIC DNA]</scope>
    <source>
        <strain>G2</strain>
    </source>
</reference>
<reference key="2">
    <citation type="journal article" date="1999" name="Nat. Struct. Biol.">
        <title>Crystal structure of 2-oxoisovalerate and dehydrogenase and the architecture of 2-oxo acid dehydrogenase multienzyme complexes.</title>
        <authorList>
            <person name="Aevarsson A."/>
            <person name="Seger K."/>
            <person name="Turley S."/>
            <person name="Sokatch J.R."/>
            <person name="Hol W.G.J."/>
        </authorList>
    </citation>
    <scope>X-RAY CRYSTALLOGRAPHY (2.4 ANGSTROMS)</scope>
</reference>
<organism>
    <name type="scientific">Pseudomonas putida</name>
    <name type="common">Arthrobacter siderocapsulatus</name>
    <dbReference type="NCBI Taxonomy" id="303"/>
    <lineage>
        <taxon>Bacteria</taxon>
        <taxon>Pseudomonadati</taxon>
        <taxon>Pseudomonadota</taxon>
        <taxon>Gammaproteobacteria</taxon>
        <taxon>Pseudomonadales</taxon>
        <taxon>Pseudomonadaceae</taxon>
        <taxon>Pseudomonas</taxon>
    </lineage>
</organism>
<feature type="chain" id="PRO_0000162251" description="2-oxoisovalerate dehydrogenase subunit beta">
    <location>
        <begin position="1"/>
        <end position="339"/>
    </location>
</feature>
<feature type="strand" evidence="2">
    <location>
        <begin position="3"/>
        <end position="5"/>
    </location>
</feature>
<feature type="helix" evidence="2">
    <location>
        <begin position="8"/>
        <end position="22"/>
    </location>
</feature>
<feature type="strand" evidence="2">
    <location>
        <begin position="26"/>
        <end position="30"/>
    </location>
</feature>
<feature type="strand" evidence="2">
    <location>
        <begin position="34"/>
        <end position="36"/>
    </location>
</feature>
<feature type="turn" evidence="2">
    <location>
        <begin position="42"/>
        <end position="45"/>
    </location>
</feature>
<feature type="helix" evidence="2">
    <location>
        <begin position="46"/>
        <end position="50"/>
    </location>
</feature>
<feature type="turn" evidence="2">
    <location>
        <begin position="52"/>
        <end position="54"/>
    </location>
</feature>
<feature type="strand" evidence="2">
    <location>
        <begin position="55"/>
        <end position="57"/>
    </location>
</feature>
<feature type="helix" evidence="2">
    <location>
        <begin position="62"/>
        <end position="75"/>
    </location>
</feature>
<feature type="strand" evidence="2">
    <location>
        <begin position="78"/>
        <end position="82"/>
    </location>
</feature>
<feature type="helix" evidence="2">
    <location>
        <begin position="86"/>
        <end position="88"/>
    </location>
</feature>
<feature type="helix" evidence="2">
    <location>
        <begin position="90"/>
        <end position="92"/>
    </location>
</feature>
<feature type="helix" evidence="2">
    <location>
        <begin position="93"/>
        <end position="97"/>
    </location>
</feature>
<feature type="turn" evidence="2">
    <location>
        <begin position="98"/>
        <end position="102"/>
    </location>
</feature>
<feature type="helix" evidence="2">
    <location>
        <begin position="103"/>
        <end position="106"/>
    </location>
</feature>
<feature type="turn" evidence="2">
    <location>
        <begin position="107"/>
        <end position="109"/>
    </location>
</feature>
<feature type="strand" evidence="2">
    <location>
        <begin position="116"/>
        <end position="121"/>
    </location>
</feature>
<feature type="strand" evidence="2">
    <location>
        <begin position="124"/>
        <end position="126"/>
    </location>
</feature>
<feature type="strand" evidence="2">
    <location>
        <begin position="129"/>
        <end position="132"/>
    </location>
</feature>
<feature type="helix" evidence="2">
    <location>
        <begin position="136"/>
        <end position="139"/>
    </location>
</feature>
<feature type="strand" evidence="2">
    <location>
        <begin position="146"/>
        <end position="148"/>
    </location>
</feature>
<feature type="helix" evidence="2">
    <location>
        <begin position="153"/>
        <end position="165"/>
    </location>
</feature>
<feature type="strand" evidence="2">
    <location>
        <begin position="166"/>
        <end position="168"/>
    </location>
</feature>
<feature type="strand" evidence="2">
    <location>
        <begin position="170"/>
        <end position="175"/>
    </location>
</feature>
<feature type="helix" evidence="2">
    <location>
        <begin position="176"/>
        <end position="178"/>
    </location>
</feature>
<feature type="strand" evidence="2">
    <location>
        <begin position="179"/>
        <end position="181"/>
    </location>
</feature>
<feature type="strand" evidence="2">
    <location>
        <begin position="187"/>
        <end position="189"/>
    </location>
</feature>
<feature type="helix" evidence="3">
    <location>
        <begin position="194"/>
        <end position="196"/>
    </location>
</feature>
<feature type="strand" evidence="2">
    <location>
        <begin position="201"/>
        <end position="205"/>
    </location>
</feature>
<feature type="strand" evidence="2">
    <location>
        <begin position="216"/>
        <end position="218"/>
    </location>
</feature>
<feature type="strand" evidence="2">
    <location>
        <begin position="224"/>
        <end position="227"/>
    </location>
</feature>
<feature type="helix" evidence="2">
    <location>
        <begin position="231"/>
        <end position="242"/>
    </location>
</feature>
<feature type="strand" evidence="2">
    <location>
        <begin position="247"/>
        <end position="250"/>
    </location>
</feature>
<feature type="strand" evidence="2">
    <location>
        <begin position="252"/>
        <end position="256"/>
    </location>
</feature>
<feature type="helix" evidence="2">
    <location>
        <begin position="259"/>
        <end position="269"/>
    </location>
</feature>
<feature type="strand" evidence="2">
    <location>
        <begin position="272"/>
        <end position="278"/>
    </location>
</feature>
<feature type="helix" evidence="2">
    <location>
        <begin position="285"/>
        <end position="295"/>
    </location>
</feature>
<feature type="strand" evidence="2">
    <location>
        <begin position="296"/>
        <end position="299"/>
    </location>
</feature>
<feature type="strand" evidence="2">
    <location>
        <begin position="305"/>
        <end position="308"/>
    </location>
</feature>
<feature type="helix" evidence="2">
    <location>
        <begin position="319"/>
        <end position="322"/>
    </location>
</feature>
<feature type="helix" evidence="2">
    <location>
        <begin position="326"/>
        <end position="335"/>
    </location>
</feature>
<proteinExistence type="evidence at protein level"/>
<accession>P09061</accession>
<gene>
    <name type="primary">bkdA2</name>
</gene>